<feature type="chain" id="PRO_0000334864" description="Ribonuclease HII">
    <location>
        <begin position="1"/>
        <end position="254"/>
    </location>
</feature>
<feature type="domain" description="RNase H type-2" evidence="2">
    <location>
        <begin position="70"/>
        <end position="254"/>
    </location>
</feature>
<feature type="binding site" evidence="1">
    <location>
        <position position="76"/>
    </location>
    <ligand>
        <name>a divalent metal cation</name>
        <dbReference type="ChEBI" id="CHEBI:60240"/>
    </ligand>
</feature>
<feature type="binding site" evidence="1">
    <location>
        <position position="77"/>
    </location>
    <ligand>
        <name>a divalent metal cation</name>
        <dbReference type="ChEBI" id="CHEBI:60240"/>
    </ligand>
</feature>
<feature type="binding site" evidence="1">
    <location>
        <position position="168"/>
    </location>
    <ligand>
        <name>a divalent metal cation</name>
        <dbReference type="ChEBI" id="CHEBI:60240"/>
    </ligand>
</feature>
<comment type="function">
    <text evidence="1">Endonuclease that specifically degrades the RNA of RNA-DNA hybrids.</text>
</comment>
<comment type="catalytic activity">
    <reaction evidence="1">
        <text>Endonucleolytic cleavage to 5'-phosphomonoester.</text>
        <dbReference type="EC" id="3.1.26.4"/>
    </reaction>
</comment>
<comment type="cofactor">
    <cofactor evidence="1">
        <name>Mn(2+)</name>
        <dbReference type="ChEBI" id="CHEBI:29035"/>
    </cofactor>
    <cofactor evidence="1">
        <name>Mg(2+)</name>
        <dbReference type="ChEBI" id="CHEBI:18420"/>
    </cofactor>
    <text evidence="1">Manganese or magnesium. Binds 1 divalent metal ion per monomer in the absence of substrate. May bind a second metal ion after substrate binding.</text>
</comment>
<comment type="subcellular location">
    <subcellularLocation>
        <location evidence="1">Cytoplasm</location>
    </subcellularLocation>
</comment>
<comment type="similarity">
    <text evidence="1">Belongs to the RNase HII family.</text>
</comment>
<evidence type="ECO:0000255" key="1">
    <source>
        <dbReference type="HAMAP-Rule" id="MF_00052"/>
    </source>
</evidence>
<evidence type="ECO:0000255" key="2">
    <source>
        <dbReference type="PROSITE-ProRule" id="PRU01319"/>
    </source>
</evidence>
<protein>
    <recommendedName>
        <fullName evidence="1">Ribonuclease HII</fullName>
        <shortName evidence="1">RNase HII</shortName>
        <ecNumber evidence="1">3.1.26.4</ecNumber>
    </recommendedName>
</protein>
<reference key="1">
    <citation type="journal article" date="2007" name="PLoS ONE">
        <title>Paradoxical DNA repair and peroxide resistance gene conservation in Bacillus pumilus SAFR-032.</title>
        <authorList>
            <person name="Gioia J."/>
            <person name="Yerrapragada S."/>
            <person name="Qin X."/>
            <person name="Jiang H."/>
            <person name="Igboeli O.C."/>
            <person name="Muzny D."/>
            <person name="Dugan-Rocha S."/>
            <person name="Ding Y."/>
            <person name="Hawes A."/>
            <person name="Liu W."/>
            <person name="Perez L."/>
            <person name="Kovar C."/>
            <person name="Dinh H."/>
            <person name="Lee S."/>
            <person name="Nazareth L."/>
            <person name="Blyth P."/>
            <person name="Holder M."/>
            <person name="Buhay C."/>
            <person name="Tirumalai M.R."/>
            <person name="Liu Y."/>
            <person name="Dasgupta I."/>
            <person name="Bokhetache L."/>
            <person name="Fujita M."/>
            <person name="Karouia F."/>
            <person name="Eswara Moorthy P."/>
            <person name="Siefert J."/>
            <person name="Uzman A."/>
            <person name="Buzumbo P."/>
            <person name="Verma A."/>
            <person name="Zwiya H."/>
            <person name="McWilliams B.D."/>
            <person name="Olowu A."/>
            <person name="Clinkenbeard K.D."/>
            <person name="Newcombe D."/>
            <person name="Golebiewski L."/>
            <person name="Petrosino J.F."/>
            <person name="Nicholson W.L."/>
            <person name="Fox G.E."/>
            <person name="Venkateswaran K."/>
            <person name="Highlander S.K."/>
            <person name="Weinstock G.M."/>
        </authorList>
    </citation>
    <scope>NUCLEOTIDE SEQUENCE [LARGE SCALE GENOMIC DNA]</scope>
    <source>
        <strain>SAFR-032</strain>
    </source>
</reference>
<keyword id="KW-0963">Cytoplasm</keyword>
<keyword id="KW-0255">Endonuclease</keyword>
<keyword id="KW-0378">Hydrolase</keyword>
<keyword id="KW-0464">Manganese</keyword>
<keyword id="KW-0479">Metal-binding</keyword>
<keyword id="KW-0540">Nuclease</keyword>
<dbReference type="EC" id="3.1.26.4" evidence="1"/>
<dbReference type="EMBL" id="CP000813">
    <property type="protein sequence ID" value="ABV62187.1"/>
    <property type="molecule type" value="Genomic_DNA"/>
</dbReference>
<dbReference type="RefSeq" id="WP_012009942.1">
    <property type="nucleotide sequence ID" value="NC_009848.4"/>
</dbReference>
<dbReference type="SMR" id="A8FD70"/>
<dbReference type="STRING" id="315750.BPUM_1504"/>
<dbReference type="GeneID" id="5620767"/>
<dbReference type="KEGG" id="bpu:BPUM_1504"/>
<dbReference type="eggNOG" id="COG0164">
    <property type="taxonomic scope" value="Bacteria"/>
</dbReference>
<dbReference type="HOGENOM" id="CLU_036532_2_1_9"/>
<dbReference type="OrthoDB" id="9803420at2"/>
<dbReference type="Proteomes" id="UP000001355">
    <property type="component" value="Chromosome"/>
</dbReference>
<dbReference type="GO" id="GO:0005737">
    <property type="term" value="C:cytoplasm"/>
    <property type="evidence" value="ECO:0007669"/>
    <property type="project" value="UniProtKB-SubCell"/>
</dbReference>
<dbReference type="GO" id="GO:0032299">
    <property type="term" value="C:ribonuclease H2 complex"/>
    <property type="evidence" value="ECO:0007669"/>
    <property type="project" value="TreeGrafter"/>
</dbReference>
<dbReference type="GO" id="GO:0030145">
    <property type="term" value="F:manganese ion binding"/>
    <property type="evidence" value="ECO:0007669"/>
    <property type="project" value="UniProtKB-UniRule"/>
</dbReference>
<dbReference type="GO" id="GO:0003723">
    <property type="term" value="F:RNA binding"/>
    <property type="evidence" value="ECO:0007669"/>
    <property type="project" value="InterPro"/>
</dbReference>
<dbReference type="GO" id="GO:0004523">
    <property type="term" value="F:RNA-DNA hybrid ribonuclease activity"/>
    <property type="evidence" value="ECO:0007669"/>
    <property type="project" value="UniProtKB-UniRule"/>
</dbReference>
<dbReference type="GO" id="GO:0043137">
    <property type="term" value="P:DNA replication, removal of RNA primer"/>
    <property type="evidence" value="ECO:0007669"/>
    <property type="project" value="TreeGrafter"/>
</dbReference>
<dbReference type="GO" id="GO:0006298">
    <property type="term" value="P:mismatch repair"/>
    <property type="evidence" value="ECO:0007669"/>
    <property type="project" value="TreeGrafter"/>
</dbReference>
<dbReference type="CDD" id="cd07182">
    <property type="entry name" value="RNase_HII_bacteria_HII_like"/>
    <property type="match status" value="1"/>
</dbReference>
<dbReference type="FunFam" id="3.30.420.10:FF:000006">
    <property type="entry name" value="Ribonuclease HII"/>
    <property type="match status" value="1"/>
</dbReference>
<dbReference type="Gene3D" id="3.30.420.10">
    <property type="entry name" value="Ribonuclease H-like superfamily/Ribonuclease H"/>
    <property type="match status" value="1"/>
</dbReference>
<dbReference type="HAMAP" id="MF_00052_B">
    <property type="entry name" value="RNase_HII_B"/>
    <property type="match status" value="1"/>
</dbReference>
<dbReference type="InterPro" id="IPR022898">
    <property type="entry name" value="RNase_HII"/>
</dbReference>
<dbReference type="InterPro" id="IPR001352">
    <property type="entry name" value="RNase_HII/HIII"/>
</dbReference>
<dbReference type="InterPro" id="IPR024567">
    <property type="entry name" value="RNase_HII/HIII_dom"/>
</dbReference>
<dbReference type="InterPro" id="IPR012337">
    <property type="entry name" value="RNaseH-like_sf"/>
</dbReference>
<dbReference type="InterPro" id="IPR036397">
    <property type="entry name" value="RNaseH_sf"/>
</dbReference>
<dbReference type="NCBIfam" id="NF000594">
    <property type="entry name" value="PRK00015.1-1"/>
    <property type="match status" value="1"/>
</dbReference>
<dbReference type="NCBIfam" id="NF000595">
    <property type="entry name" value="PRK00015.1-3"/>
    <property type="match status" value="1"/>
</dbReference>
<dbReference type="PANTHER" id="PTHR10954">
    <property type="entry name" value="RIBONUCLEASE H2 SUBUNIT A"/>
    <property type="match status" value="1"/>
</dbReference>
<dbReference type="PANTHER" id="PTHR10954:SF18">
    <property type="entry name" value="RIBONUCLEASE HII"/>
    <property type="match status" value="1"/>
</dbReference>
<dbReference type="Pfam" id="PF01351">
    <property type="entry name" value="RNase_HII"/>
    <property type="match status" value="1"/>
</dbReference>
<dbReference type="SUPFAM" id="SSF53098">
    <property type="entry name" value="Ribonuclease H-like"/>
    <property type="match status" value="1"/>
</dbReference>
<dbReference type="PROSITE" id="PS51975">
    <property type="entry name" value="RNASE_H_2"/>
    <property type="match status" value="1"/>
</dbReference>
<name>RNH2_BACP2</name>
<accession>A8FD70</accession>
<sequence>MYTVKQIKELIEKHSQDESYIHELVKDDKRKSAQKLIEKWHKEREKQQQLHAAWHEMLQFENNAKAQGYTCIAGIDEAGRGPLAGPVVAAAVILKDDTVLLGLNDSKQLSEKKRLAYYDLIQKEALDIGIGIVDAATIDEINIYEASRLAMVRAVEQLAHTPDYLLIDAMTLPLPIHQENIIKGDAKSASIAAGACIAKVTRDQMMEEYGRQYPEYQFEKHKGYGTKEHLAAIQTHGAAPIHRLSFAPVKSVIS</sequence>
<gene>
    <name evidence="1" type="primary">rnhB</name>
    <name type="ordered locus">BPUM_1504</name>
</gene>
<organism>
    <name type="scientific">Bacillus pumilus (strain SAFR-032)</name>
    <dbReference type="NCBI Taxonomy" id="315750"/>
    <lineage>
        <taxon>Bacteria</taxon>
        <taxon>Bacillati</taxon>
        <taxon>Bacillota</taxon>
        <taxon>Bacilli</taxon>
        <taxon>Bacillales</taxon>
        <taxon>Bacillaceae</taxon>
        <taxon>Bacillus</taxon>
    </lineage>
</organism>
<proteinExistence type="inferred from homology"/>